<reference key="1">
    <citation type="journal article" date="2001" name="J. Bacteriol.">
        <title>Genome of the bacterium Streptococcus pneumoniae strain R6.</title>
        <authorList>
            <person name="Hoskins J."/>
            <person name="Alborn W.E. Jr."/>
            <person name="Arnold J."/>
            <person name="Blaszczak L.C."/>
            <person name="Burgett S."/>
            <person name="DeHoff B.S."/>
            <person name="Estrem S.T."/>
            <person name="Fritz L."/>
            <person name="Fu D.-J."/>
            <person name="Fuller W."/>
            <person name="Geringer C."/>
            <person name="Gilmour R."/>
            <person name="Glass J.S."/>
            <person name="Khoja H."/>
            <person name="Kraft A.R."/>
            <person name="Lagace R.E."/>
            <person name="LeBlanc D.J."/>
            <person name="Lee L.N."/>
            <person name="Lefkowitz E.J."/>
            <person name="Lu J."/>
            <person name="Matsushima P."/>
            <person name="McAhren S.M."/>
            <person name="McHenney M."/>
            <person name="McLeaster K."/>
            <person name="Mundy C.W."/>
            <person name="Nicas T.I."/>
            <person name="Norris F.H."/>
            <person name="O'Gara M."/>
            <person name="Peery R.B."/>
            <person name="Robertson G.T."/>
            <person name="Rockey P."/>
            <person name="Sun P.-M."/>
            <person name="Winkler M.E."/>
            <person name="Yang Y."/>
            <person name="Young-Bellido M."/>
            <person name="Zhao G."/>
            <person name="Zook C.A."/>
            <person name="Baltz R.H."/>
            <person name="Jaskunas S.R."/>
            <person name="Rosteck P.R. Jr."/>
            <person name="Skatrud P.L."/>
            <person name="Glass J.I."/>
        </authorList>
    </citation>
    <scope>NUCLEOTIDE SEQUENCE [LARGE SCALE GENOMIC DNA]</scope>
    <source>
        <strain>ATCC BAA-255 / R6</strain>
    </source>
</reference>
<reference key="2">
    <citation type="journal article" date="2003" name="J. Mol. Microbiol. Biotechnol.">
        <title>A global approach to identify novel broad-spectrum antibacterial targets among proteins of unknown function.</title>
        <authorList>
            <person name="Zalacain M."/>
            <person name="Biswas S."/>
            <person name="Ingraham K.A."/>
            <person name="Ambrad J."/>
            <person name="Bryant A."/>
            <person name="Chalker A.F."/>
            <person name="Iordanescu S."/>
            <person name="Fan J."/>
            <person name="Fan F."/>
            <person name="Lunsford R.D."/>
            <person name="O'Dwyer K."/>
            <person name="Palmer L.M."/>
            <person name="So C."/>
            <person name="Sylvester D."/>
            <person name="Volker C."/>
            <person name="Warren P."/>
            <person name="McDevitt D."/>
            <person name="Brown J.R."/>
            <person name="Holmes D.J."/>
            <person name="Burnham M.K."/>
        </authorList>
    </citation>
    <scope>DISRUPTION PHENOTYPE</scope>
    <source>
        <strain>ATCC BAA-255 / R6</strain>
    </source>
</reference>
<proteinExistence type="inferred from homology"/>
<feature type="chain" id="PRO_0000172150" description="Putative pre-16S rRNA nuclease">
    <location>
        <begin position="1"/>
        <end position="139"/>
    </location>
</feature>
<gene>
    <name type="ordered locus">spr0176</name>
</gene>
<comment type="function">
    <text evidence="1">Could be a nuclease involved in processing of the 5'-end of pre-16S rRNA.</text>
</comment>
<comment type="subcellular location">
    <subcellularLocation>
        <location evidence="1">Cytoplasm</location>
    </subcellularLocation>
</comment>
<comment type="disruption phenotype">
    <text evidence="2">Probably essential, it cannot be disrupted.</text>
</comment>
<comment type="similarity">
    <text evidence="1">Belongs to the YqgF nuclease family.</text>
</comment>
<name>YQGF_STRR6</name>
<dbReference type="EC" id="3.1.-.-" evidence="1"/>
<dbReference type="EMBL" id="AE007317">
    <property type="protein sequence ID" value="AAK98980.1"/>
    <property type="molecule type" value="Genomic_DNA"/>
</dbReference>
<dbReference type="PIR" id="H97893">
    <property type="entry name" value="H97893"/>
</dbReference>
<dbReference type="RefSeq" id="NP_357770.1">
    <property type="nucleotide sequence ID" value="NC_003098.1"/>
</dbReference>
<dbReference type="SMR" id="Q8DRE2"/>
<dbReference type="STRING" id="171101.spr0176"/>
<dbReference type="KEGG" id="spr:spr0176"/>
<dbReference type="PATRIC" id="fig|171101.6.peg.208"/>
<dbReference type="eggNOG" id="COG0816">
    <property type="taxonomic scope" value="Bacteria"/>
</dbReference>
<dbReference type="HOGENOM" id="CLU_098240_2_0_9"/>
<dbReference type="Proteomes" id="UP000000586">
    <property type="component" value="Chromosome"/>
</dbReference>
<dbReference type="GO" id="GO:0005737">
    <property type="term" value="C:cytoplasm"/>
    <property type="evidence" value="ECO:0007669"/>
    <property type="project" value="UniProtKB-SubCell"/>
</dbReference>
<dbReference type="GO" id="GO:0004518">
    <property type="term" value="F:nuclease activity"/>
    <property type="evidence" value="ECO:0007669"/>
    <property type="project" value="UniProtKB-KW"/>
</dbReference>
<dbReference type="GO" id="GO:0000967">
    <property type="term" value="P:rRNA 5'-end processing"/>
    <property type="evidence" value="ECO:0000318"/>
    <property type="project" value="GO_Central"/>
</dbReference>
<dbReference type="CDD" id="cd16964">
    <property type="entry name" value="YqgF"/>
    <property type="match status" value="1"/>
</dbReference>
<dbReference type="FunFam" id="3.30.420.140:FF:000003">
    <property type="entry name" value="Putative pre-16S rRNA nuclease"/>
    <property type="match status" value="1"/>
</dbReference>
<dbReference type="Gene3D" id="3.30.420.140">
    <property type="entry name" value="YqgF/RNase H-like domain"/>
    <property type="match status" value="1"/>
</dbReference>
<dbReference type="HAMAP" id="MF_00651">
    <property type="entry name" value="Nuclease_YqgF"/>
    <property type="match status" value="1"/>
</dbReference>
<dbReference type="InterPro" id="IPR012337">
    <property type="entry name" value="RNaseH-like_sf"/>
</dbReference>
<dbReference type="InterPro" id="IPR005227">
    <property type="entry name" value="YqgF"/>
</dbReference>
<dbReference type="InterPro" id="IPR006641">
    <property type="entry name" value="YqgF/RNaseH-like_dom"/>
</dbReference>
<dbReference type="InterPro" id="IPR037027">
    <property type="entry name" value="YqgF/RNaseH-like_dom_sf"/>
</dbReference>
<dbReference type="NCBIfam" id="TIGR00250">
    <property type="entry name" value="RNAse_H_YqgF"/>
    <property type="match status" value="1"/>
</dbReference>
<dbReference type="PANTHER" id="PTHR33317">
    <property type="entry name" value="POLYNUCLEOTIDYL TRANSFERASE, RIBONUCLEASE H-LIKE SUPERFAMILY PROTEIN"/>
    <property type="match status" value="1"/>
</dbReference>
<dbReference type="PANTHER" id="PTHR33317:SF4">
    <property type="entry name" value="POLYNUCLEOTIDYL TRANSFERASE, RIBONUCLEASE H-LIKE SUPERFAMILY PROTEIN"/>
    <property type="match status" value="1"/>
</dbReference>
<dbReference type="Pfam" id="PF03652">
    <property type="entry name" value="RuvX"/>
    <property type="match status" value="1"/>
</dbReference>
<dbReference type="SMART" id="SM00732">
    <property type="entry name" value="YqgFc"/>
    <property type="match status" value="1"/>
</dbReference>
<dbReference type="SUPFAM" id="SSF53098">
    <property type="entry name" value="Ribonuclease H-like"/>
    <property type="match status" value="1"/>
</dbReference>
<sequence>MRIMGLDVGSKTVGVAISDPLGFTAQGLEIIQINEEQGQFGFDRVKELVDTYKVERFVVGLPKNMNNTSGPRVEASQAYGAKLEEFFGLPVDYQDERLTTVAAERMLIEQADISRNKRKKVIDKLAAQLILQNYLDRKF</sequence>
<organism>
    <name type="scientific">Streptococcus pneumoniae (strain ATCC BAA-255 / R6)</name>
    <dbReference type="NCBI Taxonomy" id="171101"/>
    <lineage>
        <taxon>Bacteria</taxon>
        <taxon>Bacillati</taxon>
        <taxon>Bacillota</taxon>
        <taxon>Bacilli</taxon>
        <taxon>Lactobacillales</taxon>
        <taxon>Streptococcaceae</taxon>
        <taxon>Streptococcus</taxon>
    </lineage>
</organism>
<keyword id="KW-0963">Cytoplasm</keyword>
<keyword id="KW-0378">Hydrolase</keyword>
<keyword id="KW-0540">Nuclease</keyword>
<keyword id="KW-1185">Reference proteome</keyword>
<keyword id="KW-0690">Ribosome biogenesis</keyword>
<accession>Q8DRE2</accession>
<evidence type="ECO:0000255" key="1">
    <source>
        <dbReference type="HAMAP-Rule" id="MF_00651"/>
    </source>
</evidence>
<evidence type="ECO:0000269" key="2">
    <source>
    </source>
</evidence>
<protein>
    <recommendedName>
        <fullName evidence="1">Putative pre-16S rRNA nuclease</fullName>
        <ecNumber evidence="1">3.1.-.-</ecNumber>
    </recommendedName>
</protein>